<comment type="function">
    <text evidence="1">Bifunctional enzyme with both catalase and broad-spectrum peroxidase activity.</text>
</comment>
<comment type="catalytic activity">
    <reaction evidence="1">
        <text>H2O2 + AH2 = A + 2 H2O</text>
        <dbReference type="Rhea" id="RHEA:30275"/>
        <dbReference type="ChEBI" id="CHEBI:13193"/>
        <dbReference type="ChEBI" id="CHEBI:15377"/>
        <dbReference type="ChEBI" id="CHEBI:16240"/>
        <dbReference type="ChEBI" id="CHEBI:17499"/>
        <dbReference type="EC" id="1.11.1.21"/>
    </reaction>
</comment>
<comment type="catalytic activity">
    <reaction evidence="1">
        <text>2 H2O2 = O2 + 2 H2O</text>
        <dbReference type="Rhea" id="RHEA:20309"/>
        <dbReference type="ChEBI" id="CHEBI:15377"/>
        <dbReference type="ChEBI" id="CHEBI:15379"/>
        <dbReference type="ChEBI" id="CHEBI:16240"/>
        <dbReference type="EC" id="1.11.1.21"/>
    </reaction>
</comment>
<comment type="cofactor">
    <cofactor evidence="1">
        <name>heme b</name>
        <dbReference type="ChEBI" id="CHEBI:60344"/>
    </cofactor>
    <text evidence="1">Binds 1 heme b (iron(II)-protoporphyrin IX) group per dimer.</text>
</comment>
<comment type="subunit">
    <text evidence="1">Homodimer or homotetramer.</text>
</comment>
<comment type="PTM">
    <text evidence="1">Formation of the three residue Trp-Tyr-Met cross-link is important for the catalase, but not the peroxidase activity of the enzyme.</text>
</comment>
<comment type="similarity">
    <text evidence="1">Belongs to the peroxidase family. Peroxidase/catalase subfamily.</text>
</comment>
<protein>
    <recommendedName>
        <fullName evidence="1">Catalase-peroxidase</fullName>
        <shortName evidence="1">CP</shortName>
        <ecNumber evidence="1">1.11.1.21</ecNumber>
    </recommendedName>
    <alternativeName>
        <fullName evidence="1">Peroxidase/catalase</fullName>
    </alternativeName>
</protein>
<dbReference type="EC" id="1.11.1.21" evidence="1"/>
<dbReference type="EMBL" id="CP000283">
    <property type="protein sequence ID" value="ABE37463.1"/>
    <property type="molecule type" value="Genomic_DNA"/>
</dbReference>
<dbReference type="SMR" id="Q13EM6"/>
<dbReference type="STRING" id="316057.RPD_0223"/>
<dbReference type="KEGG" id="rpd:RPD_0223"/>
<dbReference type="eggNOG" id="COG0376">
    <property type="taxonomic scope" value="Bacteria"/>
</dbReference>
<dbReference type="HOGENOM" id="CLU_025424_2_0_5"/>
<dbReference type="BioCyc" id="RPAL316057:RPD_RS01130-MONOMER"/>
<dbReference type="Proteomes" id="UP000001818">
    <property type="component" value="Chromosome"/>
</dbReference>
<dbReference type="GO" id="GO:0005829">
    <property type="term" value="C:cytosol"/>
    <property type="evidence" value="ECO:0007669"/>
    <property type="project" value="TreeGrafter"/>
</dbReference>
<dbReference type="GO" id="GO:0004096">
    <property type="term" value="F:catalase activity"/>
    <property type="evidence" value="ECO:0007669"/>
    <property type="project" value="UniProtKB-UniRule"/>
</dbReference>
<dbReference type="GO" id="GO:0020037">
    <property type="term" value="F:heme binding"/>
    <property type="evidence" value="ECO:0007669"/>
    <property type="project" value="InterPro"/>
</dbReference>
<dbReference type="GO" id="GO:0046872">
    <property type="term" value="F:metal ion binding"/>
    <property type="evidence" value="ECO:0007669"/>
    <property type="project" value="UniProtKB-KW"/>
</dbReference>
<dbReference type="GO" id="GO:0070301">
    <property type="term" value="P:cellular response to hydrogen peroxide"/>
    <property type="evidence" value="ECO:0007669"/>
    <property type="project" value="TreeGrafter"/>
</dbReference>
<dbReference type="GO" id="GO:0042744">
    <property type="term" value="P:hydrogen peroxide catabolic process"/>
    <property type="evidence" value="ECO:0007669"/>
    <property type="project" value="UniProtKB-KW"/>
</dbReference>
<dbReference type="CDD" id="cd00649">
    <property type="entry name" value="catalase_peroxidase_1"/>
    <property type="match status" value="1"/>
</dbReference>
<dbReference type="CDD" id="cd08200">
    <property type="entry name" value="catalase_peroxidase_2"/>
    <property type="match status" value="1"/>
</dbReference>
<dbReference type="FunFam" id="1.10.420.10:FF:000002">
    <property type="entry name" value="Catalase-peroxidase"/>
    <property type="match status" value="1"/>
</dbReference>
<dbReference type="FunFam" id="1.10.420.10:FF:000004">
    <property type="entry name" value="Catalase-peroxidase"/>
    <property type="match status" value="1"/>
</dbReference>
<dbReference type="FunFam" id="1.10.520.10:FF:000002">
    <property type="entry name" value="Catalase-peroxidase"/>
    <property type="match status" value="1"/>
</dbReference>
<dbReference type="Gene3D" id="1.10.520.10">
    <property type="match status" value="2"/>
</dbReference>
<dbReference type="Gene3D" id="1.10.420.10">
    <property type="entry name" value="Peroxidase, domain 2"/>
    <property type="match status" value="2"/>
</dbReference>
<dbReference type="HAMAP" id="MF_01961">
    <property type="entry name" value="Catal_peroxid"/>
    <property type="match status" value="1"/>
</dbReference>
<dbReference type="InterPro" id="IPR000763">
    <property type="entry name" value="Catalase_peroxidase"/>
</dbReference>
<dbReference type="InterPro" id="IPR002016">
    <property type="entry name" value="Haem_peroxidase"/>
</dbReference>
<dbReference type="InterPro" id="IPR010255">
    <property type="entry name" value="Haem_peroxidase_sf"/>
</dbReference>
<dbReference type="InterPro" id="IPR019794">
    <property type="entry name" value="Peroxidases_AS"/>
</dbReference>
<dbReference type="InterPro" id="IPR019793">
    <property type="entry name" value="Peroxidases_heam-ligand_BS"/>
</dbReference>
<dbReference type="NCBIfam" id="TIGR00198">
    <property type="entry name" value="cat_per_HPI"/>
    <property type="match status" value="1"/>
</dbReference>
<dbReference type="NCBIfam" id="NF011635">
    <property type="entry name" value="PRK15061.1"/>
    <property type="match status" value="1"/>
</dbReference>
<dbReference type="PANTHER" id="PTHR30555:SF0">
    <property type="entry name" value="CATALASE-PEROXIDASE"/>
    <property type="match status" value="1"/>
</dbReference>
<dbReference type="PANTHER" id="PTHR30555">
    <property type="entry name" value="HYDROPEROXIDASE I, BIFUNCTIONAL CATALASE-PEROXIDASE"/>
    <property type="match status" value="1"/>
</dbReference>
<dbReference type="Pfam" id="PF00141">
    <property type="entry name" value="peroxidase"/>
    <property type="match status" value="2"/>
</dbReference>
<dbReference type="PRINTS" id="PR00460">
    <property type="entry name" value="BPEROXIDASE"/>
</dbReference>
<dbReference type="PRINTS" id="PR00458">
    <property type="entry name" value="PEROXIDASE"/>
</dbReference>
<dbReference type="SUPFAM" id="SSF48113">
    <property type="entry name" value="Heme-dependent peroxidases"/>
    <property type="match status" value="2"/>
</dbReference>
<dbReference type="PROSITE" id="PS00435">
    <property type="entry name" value="PEROXIDASE_1"/>
    <property type="match status" value="1"/>
</dbReference>
<dbReference type="PROSITE" id="PS00436">
    <property type="entry name" value="PEROXIDASE_2"/>
    <property type="match status" value="1"/>
</dbReference>
<dbReference type="PROSITE" id="PS50873">
    <property type="entry name" value="PEROXIDASE_4"/>
    <property type="match status" value="1"/>
</dbReference>
<sequence length="732" mass="80620">MDAKTDDQGGKCPFPHGGGSRGHRNRDWWPEQLDINMLHRNSTLSDPLGKAFDYAKEFESLDLDAVIKDLHALMTDSQDWWPADFGHYGGLMIRMAWHSAGTYRTTDGRGGAGAGQQRFAPLNSWPDNANLDKARRLLWPIKQKYGNKISWADLYVLTGNVALESMGFKTFGFAGGRADTWEPEELFWGPEGSWLGDERYSGERQLHDALGAVQMGLIYVNPEGPNGNPDPVAAAKDIRETFARMAMNDEETVALIAGGHTFGKTHGAGDPSLIGAEPEGGALEDQGLGWKSKFGTGFGADAITGGPEVIWTQTPTQWSNFFFENLFGFEWELDKSPAGAKQWKAKGAEATVPDPFDPTKKRVPTMLTTDLSLRFDPAYEKISRRFFENPDQFADAFARAWFKLTHRDMGPKVRYRGKLVPKEDLIWQDPIPPVDHELVSAKDIADLKARILASGLSVSQLVSTAFASASTYRHSDKRGGANGARIRFAPQKDWEVNQPADLAQVLGKLEAIQKAFNDAQSGGKKVSLADLIVLGGSAAVEKAAKDAGTEVEVPFTPGRMDALEEQTDGDSFKVLEPRADGFRNFIGKRHQFMQPEEALVDRAQLLNLTAPEMTVLLGGLRVLGGNVGHDSHGVFTDRPEKLTNDFFVNLLDMKTAWSLSATAEGVYEGRDRKTGDLRWTGTRVDLIFGSHSQLRALAEVYGQSDAQTKFAQDFVAAWTKVMNADRFDLAAK</sequence>
<proteinExistence type="inferred from homology"/>
<evidence type="ECO:0000255" key="1">
    <source>
        <dbReference type="HAMAP-Rule" id="MF_01961"/>
    </source>
</evidence>
<evidence type="ECO:0000256" key="2">
    <source>
        <dbReference type="SAM" id="MobiDB-lite"/>
    </source>
</evidence>
<name>KATG_RHOPS</name>
<feature type="chain" id="PRO_0000354895" description="Catalase-peroxidase">
    <location>
        <begin position="1"/>
        <end position="732"/>
    </location>
</feature>
<feature type="region of interest" description="Disordered" evidence="2">
    <location>
        <begin position="1"/>
        <end position="26"/>
    </location>
</feature>
<feature type="active site" description="Proton acceptor" evidence="1">
    <location>
        <position position="98"/>
    </location>
</feature>
<feature type="binding site" description="axial binding residue" evidence="1">
    <location>
        <position position="260"/>
    </location>
    <ligand>
        <name>heme b</name>
        <dbReference type="ChEBI" id="CHEBI:60344"/>
    </ligand>
    <ligandPart>
        <name>Fe</name>
        <dbReference type="ChEBI" id="CHEBI:18248"/>
    </ligandPart>
</feature>
<feature type="site" description="Transition state stabilizer" evidence="1">
    <location>
        <position position="94"/>
    </location>
</feature>
<feature type="cross-link" description="Tryptophyl-tyrosyl-methioninium (Trp-Tyr) (with M-245)" evidence="1">
    <location>
        <begin position="97"/>
        <end position="219"/>
    </location>
</feature>
<feature type="cross-link" description="Tryptophyl-tyrosyl-methioninium (Tyr-Met) (with W-97)" evidence="1">
    <location>
        <begin position="219"/>
        <end position="245"/>
    </location>
</feature>
<gene>
    <name evidence="1" type="primary">katG</name>
    <name type="ordered locus">RPD_0223</name>
</gene>
<organism>
    <name type="scientific">Rhodopseudomonas palustris (strain BisB5)</name>
    <dbReference type="NCBI Taxonomy" id="316057"/>
    <lineage>
        <taxon>Bacteria</taxon>
        <taxon>Pseudomonadati</taxon>
        <taxon>Pseudomonadota</taxon>
        <taxon>Alphaproteobacteria</taxon>
        <taxon>Hyphomicrobiales</taxon>
        <taxon>Nitrobacteraceae</taxon>
        <taxon>Rhodopseudomonas</taxon>
    </lineage>
</organism>
<reference key="1">
    <citation type="submission" date="2006-03" db="EMBL/GenBank/DDBJ databases">
        <title>Complete sequence of Rhodopseudomonas palustris BisB5.</title>
        <authorList>
            <consortium name="US DOE Joint Genome Institute"/>
            <person name="Copeland A."/>
            <person name="Lucas S."/>
            <person name="Lapidus A."/>
            <person name="Barry K."/>
            <person name="Detter J.C."/>
            <person name="Glavina del Rio T."/>
            <person name="Hammon N."/>
            <person name="Israni S."/>
            <person name="Dalin E."/>
            <person name="Tice H."/>
            <person name="Pitluck S."/>
            <person name="Chain P."/>
            <person name="Malfatti S."/>
            <person name="Shin M."/>
            <person name="Vergez L."/>
            <person name="Schmutz J."/>
            <person name="Larimer F."/>
            <person name="Land M."/>
            <person name="Hauser L."/>
            <person name="Pelletier D.A."/>
            <person name="Kyrpides N."/>
            <person name="Lykidis A."/>
            <person name="Oda Y."/>
            <person name="Harwood C.S."/>
            <person name="Richardson P."/>
        </authorList>
    </citation>
    <scope>NUCLEOTIDE SEQUENCE [LARGE SCALE GENOMIC DNA]</scope>
    <source>
        <strain>BisB5</strain>
    </source>
</reference>
<keyword id="KW-0349">Heme</keyword>
<keyword id="KW-0376">Hydrogen peroxide</keyword>
<keyword id="KW-0408">Iron</keyword>
<keyword id="KW-0479">Metal-binding</keyword>
<keyword id="KW-0560">Oxidoreductase</keyword>
<keyword id="KW-0575">Peroxidase</keyword>
<accession>Q13EM6</accession>